<dbReference type="EC" id="7.2.1.1" evidence="1"/>
<dbReference type="EMBL" id="AM884177">
    <property type="protein sequence ID" value="CAP06927.1"/>
    <property type="molecule type" value="Genomic_DNA"/>
</dbReference>
<dbReference type="RefSeq" id="WP_009873696.1">
    <property type="nucleotide sequence ID" value="NC_010280.2"/>
</dbReference>
<dbReference type="SMR" id="B0BBR2"/>
<dbReference type="KEGG" id="ctl:CTLon_0529"/>
<dbReference type="HOGENOM" id="CLU_095255_0_0_0"/>
<dbReference type="Proteomes" id="UP001154401">
    <property type="component" value="Chromosome"/>
</dbReference>
<dbReference type="GO" id="GO:0009276">
    <property type="term" value="C:Gram-negative-bacterium-type cell wall"/>
    <property type="evidence" value="ECO:0007669"/>
    <property type="project" value="InterPro"/>
</dbReference>
<dbReference type="GO" id="GO:0005886">
    <property type="term" value="C:plasma membrane"/>
    <property type="evidence" value="ECO:0007669"/>
    <property type="project" value="UniProtKB-SubCell"/>
</dbReference>
<dbReference type="GO" id="GO:0016655">
    <property type="term" value="F:oxidoreductase activity, acting on NAD(P)H, quinone or similar compound as acceptor"/>
    <property type="evidence" value="ECO:0007669"/>
    <property type="project" value="UniProtKB-UniRule"/>
</dbReference>
<dbReference type="GO" id="GO:0022904">
    <property type="term" value="P:respiratory electron transport chain"/>
    <property type="evidence" value="ECO:0007669"/>
    <property type="project" value="InterPro"/>
</dbReference>
<dbReference type="GO" id="GO:0006814">
    <property type="term" value="P:sodium ion transport"/>
    <property type="evidence" value="ECO:0007669"/>
    <property type="project" value="UniProtKB-UniRule"/>
</dbReference>
<dbReference type="HAMAP" id="MF_00429">
    <property type="entry name" value="NqrE"/>
    <property type="match status" value="1"/>
</dbReference>
<dbReference type="InterPro" id="IPR003667">
    <property type="entry name" value="NqrDE/RnfAE"/>
</dbReference>
<dbReference type="InterPro" id="IPR050133">
    <property type="entry name" value="NqrDE/RnfAE_oxidrdctase"/>
</dbReference>
<dbReference type="InterPro" id="IPR010967">
    <property type="entry name" value="NqrE"/>
</dbReference>
<dbReference type="NCBIfam" id="TIGR01940">
    <property type="entry name" value="nqrE"/>
    <property type="match status" value="1"/>
</dbReference>
<dbReference type="NCBIfam" id="NF002200">
    <property type="entry name" value="PRK01061.1"/>
    <property type="match status" value="1"/>
</dbReference>
<dbReference type="PANTHER" id="PTHR30335">
    <property type="entry name" value="INTEGRAL MEMBRANE PROTEIN OF SOXR-REDUCING COMPLEX"/>
    <property type="match status" value="1"/>
</dbReference>
<dbReference type="PANTHER" id="PTHR30335:SF1">
    <property type="entry name" value="NA(+)-TRANSLOCATING NADH-QUINONE REDUCTASE SUBUNIT E"/>
    <property type="match status" value="1"/>
</dbReference>
<dbReference type="Pfam" id="PF02508">
    <property type="entry name" value="Rnf-Nqr"/>
    <property type="match status" value="1"/>
</dbReference>
<dbReference type="PIRSF" id="PIRSF006102">
    <property type="entry name" value="NQR_DE"/>
    <property type="match status" value="1"/>
</dbReference>
<accession>B0BBR2</accession>
<keyword id="KW-0997">Cell inner membrane</keyword>
<keyword id="KW-1003">Cell membrane</keyword>
<keyword id="KW-0406">Ion transport</keyword>
<keyword id="KW-0472">Membrane</keyword>
<keyword id="KW-0520">NAD</keyword>
<keyword id="KW-0915">Sodium</keyword>
<keyword id="KW-0739">Sodium transport</keyword>
<keyword id="KW-1278">Translocase</keyword>
<keyword id="KW-0812">Transmembrane</keyword>
<keyword id="KW-1133">Transmembrane helix</keyword>
<keyword id="KW-0813">Transport</keyword>
<keyword id="KW-0830">Ubiquinone</keyword>
<evidence type="ECO:0000255" key="1">
    <source>
        <dbReference type="HAMAP-Rule" id="MF_00429"/>
    </source>
</evidence>
<proteinExistence type="inferred from homology"/>
<reference key="1">
    <citation type="journal article" date="2008" name="Genome Res.">
        <title>Chlamydia trachomatis: genome sequence analysis of lymphogranuloma venereum isolates.</title>
        <authorList>
            <person name="Thomson N.R."/>
            <person name="Holden M.T.G."/>
            <person name="Carder C."/>
            <person name="Lennard N."/>
            <person name="Lockey S.J."/>
            <person name="Marsh P."/>
            <person name="Skipp P."/>
            <person name="O'Connor C.D."/>
            <person name="Goodhead I."/>
            <person name="Norbertzcak H."/>
            <person name="Harris B."/>
            <person name="Ormond D."/>
            <person name="Rance R."/>
            <person name="Quail M.A."/>
            <person name="Parkhill J."/>
            <person name="Stephens R.S."/>
            <person name="Clarke I.N."/>
        </authorList>
    </citation>
    <scope>NUCLEOTIDE SEQUENCE [LARGE SCALE GENOMIC DNA]</scope>
    <source>
        <strain>UCH-1/proctitis</strain>
    </source>
</reference>
<gene>
    <name evidence="1" type="primary">nqrE</name>
    <name type="ordered locus">CTLon_0529</name>
</gene>
<comment type="function">
    <text evidence="1">NQR complex catalyzes the reduction of ubiquinone-1 to ubiquinol by two successive reactions, coupled with the transport of Na(+) ions from the cytoplasm to the periplasm. NqrA to NqrE are probably involved in the second step, the conversion of ubisemiquinone to ubiquinol.</text>
</comment>
<comment type="catalytic activity">
    <reaction evidence="1">
        <text>a ubiquinone + n Na(+)(in) + NADH + H(+) = a ubiquinol + n Na(+)(out) + NAD(+)</text>
        <dbReference type="Rhea" id="RHEA:47748"/>
        <dbReference type="Rhea" id="RHEA-COMP:9565"/>
        <dbReference type="Rhea" id="RHEA-COMP:9566"/>
        <dbReference type="ChEBI" id="CHEBI:15378"/>
        <dbReference type="ChEBI" id="CHEBI:16389"/>
        <dbReference type="ChEBI" id="CHEBI:17976"/>
        <dbReference type="ChEBI" id="CHEBI:29101"/>
        <dbReference type="ChEBI" id="CHEBI:57540"/>
        <dbReference type="ChEBI" id="CHEBI:57945"/>
        <dbReference type="EC" id="7.2.1.1"/>
    </reaction>
</comment>
<comment type="subunit">
    <text evidence="1">Composed of six subunits; NqrA, NqrB, NqrC, NqrD, NqrE and NqrF.</text>
</comment>
<comment type="subcellular location">
    <subcellularLocation>
        <location evidence="1">Cell inner membrane</location>
        <topology evidence="1">Multi-pass membrane protein</topology>
    </subcellularLocation>
</comment>
<comment type="similarity">
    <text evidence="1">Belongs to the NqrDE/RnfAE family.</text>
</comment>
<protein>
    <recommendedName>
        <fullName evidence="1">Na(+)-translocating NADH-quinone reductase subunit E</fullName>
        <shortName evidence="1">Na(+)-NQR subunit E</shortName>
        <shortName evidence="1">Na(+)-translocating NQR subunit E</shortName>
        <ecNumber evidence="1">7.2.1.1</ecNumber>
    </recommendedName>
    <alternativeName>
        <fullName evidence="1">NQR complex subunit E</fullName>
    </alternativeName>
    <alternativeName>
        <fullName evidence="1">NQR-1 subunit E</fullName>
    </alternativeName>
</protein>
<name>NQRE_CHLTB</name>
<sequence>MWLGDYSLLNLLGIFLQATFIQNILLSTFLGMCSYLACSSRLSTANGLGMSVALVLTITGSINWLVHYFITKPGALAWLSPALANIDLSFLELIMFIVVIAAFTQILELLLERFSRNLYLALGIFLPLIAVNCAILGGVLFGITRNYPFLPMVVFSLGSGCGWWLAIVLFATIREKLAYSDVPQHLRGTGISFITTGLMAMAFMGLTGIDISKPTTSKPAFVMNIATDSPQPNTHSSSEEPKAS</sequence>
<organism>
    <name type="scientific">Chlamydia trachomatis serovar L2b (strain UCH-1/proctitis)</name>
    <dbReference type="NCBI Taxonomy" id="471473"/>
    <lineage>
        <taxon>Bacteria</taxon>
        <taxon>Pseudomonadati</taxon>
        <taxon>Chlamydiota</taxon>
        <taxon>Chlamydiia</taxon>
        <taxon>Chlamydiales</taxon>
        <taxon>Chlamydiaceae</taxon>
        <taxon>Chlamydia/Chlamydophila group</taxon>
        <taxon>Chlamydia</taxon>
    </lineage>
</organism>
<feature type="chain" id="PRO_1000191700" description="Na(+)-translocating NADH-quinone reductase subunit E">
    <location>
        <begin position="1"/>
        <end position="244"/>
    </location>
</feature>
<feature type="transmembrane region" description="Helical" evidence="1">
    <location>
        <begin position="11"/>
        <end position="31"/>
    </location>
</feature>
<feature type="transmembrane region" description="Helical" evidence="1">
    <location>
        <begin position="50"/>
        <end position="70"/>
    </location>
</feature>
<feature type="transmembrane region" description="Helical" evidence="1">
    <location>
        <begin position="90"/>
        <end position="110"/>
    </location>
</feature>
<feature type="transmembrane region" description="Helical" evidence="1">
    <location>
        <begin position="123"/>
        <end position="143"/>
    </location>
</feature>
<feature type="transmembrane region" description="Helical" evidence="1">
    <location>
        <begin position="153"/>
        <end position="173"/>
    </location>
</feature>
<feature type="transmembrane region" description="Helical" evidence="1">
    <location>
        <begin position="191"/>
        <end position="211"/>
    </location>
</feature>